<accession>O70577</accession>
<accession>Q8BWF6</accession>
<accession>Q8K4X8</accession>
<protein>
    <recommendedName>
        <fullName evidence="7">Solute carrier family 22 member 2</fullName>
    </recommendedName>
    <alternativeName>
        <fullName evidence="7">Organic cation transporter 2</fullName>
        <shortName evidence="9">mOCT2</shortName>
    </alternativeName>
</protein>
<organism>
    <name type="scientific">Mus musculus</name>
    <name type="common">Mouse</name>
    <dbReference type="NCBI Taxonomy" id="10090"/>
    <lineage>
        <taxon>Eukaryota</taxon>
        <taxon>Metazoa</taxon>
        <taxon>Chordata</taxon>
        <taxon>Craniata</taxon>
        <taxon>Vertebrata</taxon>
        <taxon>Euteleostomi</taxon>
        <taxon>Mammalia</taxon>
        <taxon>Eutheria</taxon>
        <taxon>Euarchontoglires</taxon>
        <taxon>Glires</taxon>
        <taxon>Rodentia</taxon>
        <taxon>Myomorpha</taxon>
        <taxon>Muroidea</taxon>
        <taxon>Muridae</taxon>
        <taxon>Murinae</taxon>
        <taxon>Mus</taxon>
        <taxon>Mus</taxon>
    </lineage>
</organism>
<feature type="chain" id="PRO_0000320958" description="Solute carrier family 22 member 2">
    <location>
        <begin position="1"/>
        <end position="553"/>
    </location>
</feature>
<feature type="topological domain" description="Cytoplasmic" evidence="3">
    <location>
        <begin position="1"/>
        <end position="21"/>
    </location>
</feature>
<feature type="transmembrane region" description="Helical" evidence="3">
    <location>
        <begin position="22"/>
        <end position="42"/>
    </location>
</feature>
<feature type="topological domain" description="Extracellular" evidence="3">
    <location>
        <begin position="43"/>
        <end position="150"/>
    </location>
</feature>
<feature type="transmembrane region" description="Helical" evidence="3">
    <location>
        <begin position="151"/>
        <end position="171"/>
    </location>
</feature>
<feature type="topological domain" description="Cytoplasmic" evidence="3">
    <location>
        <begin position="172"/>
        <end position="177"/>
    </location>
</feature>
<feature type="transmembrane region" description="Helical" evidence="3">
    <location>
        <begin position="178"/>
        <end position="198"/>
    </location>
</feature>
<feature type="topological domain" description="Extracellular" evidence="3">
    <location>
        <begin position="199"/>
        <end position="210"/>
    </location>
</feature>
<feature type="transmembrane region" description="Helical" evidence="3">
    <location>
        <begin position="211"/>
        <end position="231"/>
    </location>
</feature>
<feature type="topological domain" description="Cytoplasmic" evidence="3">
    <location>
        <begin position="232"/>
        <end position="238"/>
    </location>
</feature>
<feature type="transmembrane region" description="Helical" evidence="3">
    <location>
        <begin position="239"/>
        <end position="259"/>
    </location>
</feature>
<feature type="topological domain" description="Extracellular" evidence="3">
    <location>
        <begin position="260"/>
        <end position="263"/>
    </location>
</feature>
<feature type="transmembrane region" description="Helical" evidence="3">
    <location>
        <begin position="264"/>
        <end position="284"/>
    </location>
</feature>
<feature type="topological domain" description="Cytoplasmic" evidence="3">
    <location>
        <begin position="285"/>
        <end position="348"/>
    </location>
</feature>
<feature type="transmembrane region" description="Helical" evidence="3">
    <location>
        <begin position="349"/>
        <end position="369"/>
    </location>
</feature>
<feature type="topological domain" description="Extracellular" evidence="3">
    <location>
        <begin position="370"/>
        <end position="375"/>
    </location>
</feature>
<feature type="transmembrane region" description="Helical" evidence="3">
    <location>
        <begin position="376"/>
        <end position="396"/>
    </location>
</feature>
<feature type="topological domain" description="Cytoplasmic" evidence="3">
    <location>
        <begin position="397"/>
        <end position="404"/>
    </location>
</feature>
<feature type="transmembrane region" description="Helical" evidence="3">
    <location>
        <begin position="405"/>
        <end position="425"/>
    </location>
</feature>
<feature type="topological domain" description="Extracellular" evidence="3">
    <location>
        <begin position="426"/>
        <end position="432"/>
    </location>
</feature>
<feature type="transmembrane region" description="Helical" evidence="3">
    <location>
        <begin position="433"/>
        <end position="453"/>
    </location>
</feature>
<feature type="topological domain" description="Cytoplasmic" evidence="3">
    <location>
        <begin position="454"/>
        <end position="464"/>
    </location>
</feature>
<feature type="transmembrane region" description="Helical" evidence="3">
    <location>
        <begin position="465"/>
        <end position="485"/>
    </location>
</feature>
<feature type="topological domain" description="Extracellular" evidence="3">
    <location>
        <begin position="486"/>
        <end position="494"/>
    </location>
</feature>
<feature type="transmembrane region" description="Helical" evidence="3">
    <location>
        <begin position="495"/>
        <end position="515"/>
    </location>
</feature>
<feature type="topological domain" description="Cytoplasmic" evidence="3">
    <location>
        <begin position="516"/>
        <end position="553"/>
    </location>
</feature>
<feature type="short sequence motif" description="Proline-rich sequence" evidence="1">
    <location>
        <begin position="284"/>
        <end position="288"/>
    </location>
</feature>
<feature type="site" description="Involved in recognition of organic cations and participates in structural changes that occur during translocation of organic cations" evidence="2">
    <location>
        <position position="451"/>
    </location>
</feature>
<feature type="glycosylation site" description="N-linked (GlcNAc...) asparagine" evidence="3">
    <location>
        <position position="71"/>
    </location>
</feature>
<feature type="splice variant" id="VSP_031775" description="In isoform 2." evidence="8">
    <original>RPRKKKEKRIY</original>
    <variation>SLGRLVQTVCH</variation>
    <location>
        <begin position="534"/>
        <end position="544"/>
    </location>
</feature>
<feature type="splice variant" id="VSP_031776" description="In isoform 2." evidence="8">
    <location>
        <begin position="545"/>
        <end position="553"/>
    </location>
</feature>
<sequence length="553" mass="61831">MPTVDDILEHIGEFHLFQKQTFFLLALLSGAFTPIYVGIVFLGFTPNHHCRSPGVAELSQRCGWSPAEELNYTVPGLGSAGEVSFLSQCMRYEVDWNQSTLDCVDPLSSLAANRSHLPLSPCEHGWVYDTPGSSIVTEFNLVCAHSWMLDLFQSLVNVGFFIGAVGIGYLADRFGRKFCLLVTILINAISGVLMAISPNYAWMLVFRFLQGLVSKAGWLIGYILITEFVGLGYRRTVGICYQIAFTVGLLILAGVAYALPNWRWLQFAVTLPNFCFLLYFWCIPESPRWLISQNKNAKAMKIIKHIAKKNGKSVPVSLQSLTADEDTGMKLNPSFLDLVRTPQIRKHTLILMYNWFTSSVLYQGLIMHMGLAGDNIYLDFFYSALVEFPAAFIIILTIDRIGRRYPWAVSNMVAGAACLASVFIPDDLQWLKITVACLGRMGITIAYEMVCLVNAELYPTYIRNLAVLVCSSMCDIGGIVTPFLVYRLTDIWLEFPLVVFAVVGLVAGGLVLLLPETKGKALPETIEDAEKMQRPRKKKEKRIYLQVKKAELS</sequence>
<proteinExistence type="evidence at protein level"/>
<name>S22A2_MOUSE</name>
<reference key="1">
    <citation type="journal article" date="1999" name="Mamm. Genome">
        <title>Cloning of the mouse organic cation transporter 2 gene, Slc22a2, from an enhancer-trap transgene integration locus.</title>
        <authorList>
            <person name="Mooslehner K.A."/>
            <person name="Allen N.D."/>
        </authorList>
    </citation>
    <scope>NUCLEOTIDE SEQUENCE [MRNA] (ISOFORM 1)</scope>
    <scope>TISSUE SPECIFICITY</scope>
    <source>
        <strain>129</strain>
        <strain>BALB/cJ</strain>
        <tissue>Kidney</tissue>
        <tissue>Liver</tissue>
    </source>
</reference>
<reference key="2">
    <citation type="journal article" date="2005" name="Science">
        <title>The transcriptional landscape of the mammalian genome.</title>
        <authorList>
            <person name="Carninci P."/>
            <person name="Kasukawa T."/>
            <person name="Katayama S."/>
            <person name="Gough J."/>
            <person name="Frith M.C."/>
            <person name="Maeda N."/>
            <person name="Oyama R."/>
            <person name="Ravasi T."/>
            <person name="Lenhard B."/>
            <person name="Wells C."/>
            <person name="Kodzius R."/>
            <person name="Shimokawa K."/>
            <person name="Bajic V.B."/>
            <person name="Brenner S.E."/>
            <person name="Batalov S."/>
            <person name="Forrest A.R."/>
            <person name="Zavolan M."/>
            <person name="Davis M.J."/>
            <person name="Wilming L.G."/>
            <person name="Aidinis V."/>
            <person name="Allen J.E."/>
            <person name="Ambesi-Impiombato A."/>
            <person name="Apweiler R."/>
            <person name="Aturaliya R.N."/>
            <person name="Bailey T.L."/>
            <person name="Bansal M."/>
            <person name="Baxter L."/>
            <person name="Beisel K.W."/>
            <person name="Bersano T."/>
            <person name="Bono H."/>
            <person name="Chalk A.M."/>
            <person name="Chiu K.P."/>
            <person name="Choudhary V."/>
            <person name="Christoffels A."/>
            <person name="Clutterbuck D.R."/>
            <person name="Crowe M.L."/>
            <person name="Dalla E."/>
            <person name="Dalrymple B.P."/>
            <person name="de Bono B."/>
            <person name="Della Gatta G."/>
            <person name="di Bernardo D."/>
            <person name="Down T."/>
            <person name="Engstrom P."/>
            <person name="Fagiolini M."/>
            <person name="Faulkner G."/>
            <person name="Fletcher C.F."/>
            <person name="Fukushima T."/>
            <person name="Furuno M."/>
            <person name="Futaki S."/>
            <person name="Gariboldi M."/>
            <person name="Georgii-Hemming P."/>
            <person name="Gingeras T.R."/>
            <person name="Gojobori T."/>
            <person name="Green R.E."/>
            <person name="Gustincich S."/>
            <person name="Harbers M."/>
            <person name="Hayashi Y."/>
            <person name="Hensch T.K."/>
            <person name="Hirokawa N."/>
            <person name="Hill D."/>
            <person name="Huminiecki L."/>
            <person name="Iacono M."/>
            <person name="Ikeo K."/>
            <person name="Iwama A."/>
            <person name="Ishikawa T."/>
            <person name="Jakt M."/>
            <person name="Kanapin A."/>
            <person name="Katoh M."/>
            <person name="Kawasawa Y."/>
            <person name="Kelso J."/>
            <person name="Kitamura H."/>
            <person name="Kitano H."/>
            <person name="Kollias G."/>
            <person name="Krishnan S.P."/>
            <person name="Kruger A."/>
            <person name="Kummerfeld S.K."/>
            <person name="Kurochkin I.V."/>
            <person name="Lareau L.F."/>
            <person name="Lazarevic D."/>
            <person name="Lipovich L."/>
            <person name="Liu J."/>
            <person name="Liuni S."/>
            <person name="McWilliam S."/>
            <person name="Madan Babu M."/>
            <person name="Madera M."/>
            <person name="Marchionni L."/>
            <person name="Matsuda H."/>
            <person name="Matsuzawa S."/>
            <person name="Miki H."/>
            <person name="Mignone F."/>
            <person name="Miyake S."/>
            <person name="Morris K."/>
            <person name="Mottagui-Tabar S."/>
            <person name="Mulder N."/>
            <person name="Nakano N."/>
            <person name="Nakauchi H."/>
            <person name="Ng P."/>
            <person name="Nilsson R."/>
            <person name="Nishiguchi S."/>
            <person name="Nishikawa S."/>
            <person name="Nori F."/>
            <person name="Ohara O."/>
            <person name="Okazaki Y."/>
            <person name="Orlando V."/>
            <person name="Pang K.C."/>
            <person name="Pavan W.J."/>
            <person name="Pavesi G."/>
            <person name="Pesole G."/>
            <person name="Petrovsky N."/>
            <person name="Piazza S."/>
            <person name="Reed J."/>
            <person name="Reid J.F."/>
            <person name="Ring B.Z."/>
            <person name="Ringwald M."/>
            <person name="Rost B."/>
            <person name="Ruan Y."/>
            <person name="Salzberg S.L."/>
            <person name="Sandelin A."/>
            <person name="Schneider C."/>
            <person name="Schoenbach C."/>
            <person name="Sekiguchi K."/>
            <person name="Semple C.A."/>
            <person name="Seno S."/>
            <person name="Sessa L."/>
            <person name="Sheng Y."/>
            <person name="Shibata Y."/>
            <person name="Shimada H."/>
            <person name="Shimada K."/>
            <person name="Silva D."/>
            <person name="Sinclair B."/>
            <person name="Sperling S."/>
            <person name="Stupka E."/>
            <person name="Sugiura K."/>
            <person name="Sultana R."/>
            <person name="Takenaka Y."/>
            <person name="Taki K."/>
            <person name="Tammoja K."/>
            <person name="Tan S.L."/>
            <person name="Tang S."/>
            <person name="Taylor M.S."/>
            <person name="Tegner J."/>
            <person name="Teichmann S.A."/>
            <person name="Ueda H.R."/>
            <person name="van Nimwegen E."/>
            <person name="Verardo R."/>
            <person name="Wei C.L."/>
            <person name="Yagi K."/>
            <person name="Yamanishi H."/>
            <person name="Zabarovsky E."/>
            <person name="Zhu S."/>
            <person name="Zimmer A."/>
            <person name="Hide W."/>
            <person name="Bult C."/>
            <person name="Grimmond S.M."/>
            <person name="Teasdale R.D."/>
            <person name="Liu E.T."/>
            <person name="Brusic V."/>
            <person name="Quackenbush J."/>
            <person name="Wahlestedt C."/>
            <person name="Mattick J.S."/>
            <person name="Hume D.A."/>
            <person name="Kai C."/>
            <person name="Sasaki D."/>
            <person name="Tomaru Y."/>
            <person name="Fukuda S."/>
            <person name="Kanamori-Katayama M."/>
            <person name="Suzuki M."/>
            <person name="Aoki J."/>
            <person name="Arakawa T."/>
            <person name="Iida J."/>
            <person name="Imamura K."/>
            <person name="Itoh M."/>
            <person name="Kato T."/>
            <person name="Kawaji H."/>
            <person name="Kawagashira N."/>
            <person name="Kawashima T."/>
            <person name="Kojima M."/>
            <person name="Kondo S."/>
            <person name="Konno H."/>
            <person name="Nakano K."/>
            <person name="Ninomiya N."/>
            <person name="Nishio T."/>
            <person name="Okada M."/>
            <person name="Plessy C."/>
            <person name="Shibata K."/>
            <person name="Shiraki T."/>
            <person name="Suzuki S."/>
            <person name="Tagami M."/>
            <person name="Waki K."/>
            <person name="Watahiki A."/>
            <person name="Okamura-Oho Y."/>
            <person name="Suzuki H."/>
            <person name="Kawai J."/>
            <person name="Hayashizaki Y."/>
        </authorList>
    </citation>
    <scope>NUCLEOTIDE SEQUENCE [LARGE SCALE MRNA] (ISOFORM 2)</scope>
    <source>
        <strain>C57BL/6J</strain>
        <tissue>Kidney</tissue>
    </source>
</reference>
<reference key="3">
    <citation type="journal article" date="2004" name="Genome Res.">
        <title>The status, quality, and expansion of the NIH full-length cDNA project: the Mammalian Gene Collection (MGC).</title>
        <authorList>
            <consortium name="The MGC Project Team"/>
        </authorList>
    </citation>
    <scope>NUCLEOTIDE SEQUENCE [LARGE SCALE MRNA] (ISOFORM 1)</scope>
    <source>
        <strain>FVB/N</strain>
        <tissue>Kidney</tissue>
    </source>
</reference>
<reference key="4">
    <citation type="submission" date="2002-02" db="EMBL/GenBank/DDBJ databases">
        <title>Genomic sequence analysis in the mouse T-complex region.</title>
        <authorList>
            <person name="Brathwaite M."/>
            <person name="Waeltz P."/>
            <person name="Qian Y."/>
            <person name="Dudekula D."/>
            <person name="Schlessinger D."/>
            <person name="Nagaraja R."/>
        </authorList>
    </citation>
    <scope>NUCLEOTIDE SEQUENCE [LARGE SCALE GENOMIC DNA] OF 226-553</scope>
    <source>
        <strain>129S6/SvEvTac</strain>
    </source>
</reference>
<reference key="5">
    <citation type="journal article" date="2010" name="Cell">
        <title>A tissue-specific atlas of mouse protein phosphorylation and expression.</title>
        <authorList>
            <person name="Huttlin E.L."/>
            <person name="Jedrychowski M.P."/>
            <person name="Elias J.E."/>
            <person name="Goswami T."/>
            <person name="Rad R."/>
            <person name="Beausoleil S.A."/>
            <person name="Villen J."/>
            <person name="Haas W."/>
            <person name="Sowa M.E."/>
            <person name="Gygi S.P."/>
        </authorList>
    </citation>
    <scope>IDENTIFICATION BY MASS SPECTROMETRY [LARGE SCALE ANALYSIS]</scope>
    <source>
        <tissue>Kidney</tissue>
    </source>
</reference>
<reference key="6">
    <citation type="journal article" date="2013" name="Mol. Pharm.">
        <title>Polyamine transport by the polyspecific organic cation transporters OCT1, OCT2, and OCT3.</title>
        <authorList>
            <person name="Sala-Rabanal M."/>
            <person name="Li D.C."/>
            <person name="Dake G.R."/>
            <person name="Kurata H.T."/>
            <person name="Inyushin M."/>
            <person name="Skatchkov S.N."/>
            <person name="Nichols C.G."/>
        </authorList>
    </citation>
    <scope>FUNCTION</scope>
    <scope>TRANSPORTER ACTIVITY</scope>
    <scope>MISCELLANEOUS</scope>
</reference>
<reference key="7">
    <citation type="journal article" date="2016" name="Nat. Commun.">
        <title>A phosphotyrosine switch regulates organic cation transporters.</title>
        <authorList>
            <person name="Sprowl J.A."/>
            <person name="Ong S.S."/>
            <person name="Gibson A.A."/>
            <person name="Hu S."/>
            <person name="Du G."/>
            <person name="Lin W."/>
            <person name="Li L."/>
            <person name="Bharill S."/>
            <person name="Ness R.A."/>
            <person name="Stecula A."/>
            <person name="Offer S.M."/>
            <person name="Diasio R.B."/>
            <person name="Nies A.T."/>
            <person name="Schwab M."/>
            <person name="Cavaletti G."/>
            <person name="Schlatter E."/>
            <person name="Ciarimboli G."/>
            <person name="Schellens J.H.M."/>
            <person name="Isacoff E.Y."/>
            <person name="Sali A."/>
            <person name="Chen T."/>
            <person name="Baker S.D."/>
            <person name="Sparreboom A."/>
            <person name="Pabla N."/>
        </authorList>
    </citation>
    <scope>ACTIVITY REGULATION</scope>
    <scope>TISSUE SPECIFICITY</scope>
    <scope>DOMAIN</scope>
    <scope>PHOSPHORYLATION</scope>
</reference>
<gene>
    <name evidence="12" type="primary">Slc22a2</name>
    <name type="synonym">Oct2</name>
</gene>
<evidence type="ECO:0000250" key="1">
    <source>
        <dbReference type="UniProtKB" id="O15244"/>
    </source>
</evidence>
<evidence type="ECO:0000250" key="2">
    <source>
        <dbReference type="UniProtKB" id="Q9R0W2"/>
    </source>
</evidence>
<evidence type="ECO:0000255" key="3"/>
<evidence type="ECO:0000269" key="4">
    <source>
    </source>
</evidence>
<evidence type="ECO:0000269" key="5">
    <source>
    </source>
</evidence>
<evidence type="ECO:0000269" key="6">
    <source>
    </source>
</evidence>
<evidence type="ECO:0000303" key="7">
    <source>
    </source>
</evidence>
<evidence type="ECO:0000303" key="8">
    <source>
    </source>
</evidence>
<evidence type="ECO:0000303" key="9">
    <source>
    </source>
</evidence>
<evidence type="ECO:0000305" key="10"/>
<evidence type="ECO:0000305" key="11">
    <source>
    </source>
</evidence>
<evidence type="ECO:0000312" key="12">
    <source>
        <dbReference type="MGI" id="MGI:1335072"/>
    </source>
</evidence>
<comment type="function">
    <text evidence="1 2 5">Electrogenic voltage-dependent transporter that mediates the transport of a variety of organic cations such as endogenous bioactive amines, cationic drugs and xenobiotics (PubMed:23458604). Functions as a Na(+)-independent, bidirectional uniporter (By similarity). Cation cellular uptake or release is driven by the electrochemical potential, i.e. membrane potential and concentration gradient (By similarity). However, may also engage electroneutral cation exchange when saturating concentrations of cation substrates are reached (By similarity). Predominantly expressed at the basolateral membrane of hepatocytes and proximal tubules and involved in the uptake and disposition of cationic compounds by hepatic and renal clearance from the blood flow. Implicated in monoamine neurotransmitters uptake such as histamine, dopamine, adrenaline/epinephrine, noradrenaline/norepinephrine, serotonin and tyramine, thereby supporting a physiological role in the central nervous system by regulating interstitial concentrations of neurotransmitters. Also capable of transporting dopaminergic neuromodulators cyclo(his-pro), salsolinol and N-methyl-salsolinol, thereby involved in the maintenance of dopaminergic cell integrity in the central nervous system. Mediates the bidirectional transport of acetylcholine (ACh) at the apical membrane of ciliated cell in airway epithelium, thereby playing a role in luminal release of ACh from bronchial epithelium. Also transports guanidine and endogenous monoamines such as vitamin B1/thiamine, creatinine and N-1-methylnicotinamide (NMN). Mediates the uptake and efflux of quaternary ammonium compound choline (By similarity). Mediates the bidirectional transport of polyamine agmatine and the uptake of polyamines putrescine and spermidine (PubMed:23458604). Able to transport non-amine endogenous compounds such as prostaglandin E2 (PGE2) and prostaglandin F2-alpha (PGF2-alpha). Also involved in the uptake of xenobiotic 4-(4-(dimethylamino)styryl)-N-methylpyridinium (ASP). May contribute to regulate the transport of organic compounds in testis across the blood-testis-barrier (By similarity).</text>
</comment>
<comment type="catalytic activity">
    <reaction evidence="1">
        <text>(R)-noradrenaline(out) = (R)-noradrenaline(in)</text>
        <dbReference type="Rhea" id="RHEA:73871"/>
        <dbReference type="ChEBI" id="CHEBI:72587"/>
    </reaction>
</comment>
<comment type="catalytic activity">
    <reaction evidence="2">
        <text>(R)-adrenaline(out) = (R)-adrenaline(in)</text>
        <dbReference type="Rhea" id="RHEA:73875"/>
        <dbReference type="ChEBI" id="CHEBI:71406"/>
    </reaction>
</comment>
<comment type="catalytic activity">
    <reaction evidence="1">
        <text>serotonin(out) = serotonin(in)</text>
        <dbReference type="Rhea" id="RHEA:73867"/>
        <dbReference type="ChEBI" id="CHEBI:350546"/>
    </reaction>
</comment>
<comment type="catalytic activity">
    <reaction evidence="1">
        <text>dopamine(out) = dopamine(in)</text>
        <dbReference type="Rhea" id="RHEA:73863"/>
        <dbReference type="ChEBI" id="CHEBI:59905"/>
    </reaction>
</comment>
<comment type="catalytic activity">
    <reaction evidence="1">
        <text>histamine(out) = histamine(in)</text>
        <dbReference type="Rhea" id="RHEA:73879"/>
        <dbReference type="ChEBI" id="CHEBI:58432"/>
    </reaction>
</comment>
<comment type="catalytic activity">
    <reaction evidence="1">
        <text>thiamine(in) = thiamine(out)</text>
        <dbReference type="Rhea" id="RHEA:34919"/>
        <dbReference type="ChEBI" id="CHEBI:18385"/>
    </reaction>
</comment>
<comment type="catalytic activity">
    <reaction evidence="1">
        <text>creatinine(in) = creatinine(out)</text>
        <dbReference type="Rhea" id="RHEA:74539"/>
        <dbReference type="ChEBI" id="CHEBI:16737"/>
    </reaction>
</comment>
<comment type="catalytic activity">
    <reaction evidence="1">
        <text>1-methylnicotinamide(out) = 1-methylnicotinamide(in)</text>
        <dbReference type="Rhea" id="RHEA:73859"/>
        <dbReference type="ChEBI" id="CHEBI:16797"/>
    </reaction>
</comment>
<comment type="catalytic activity">
    <reaction evidence="1">
        <text>guanidine(out) = guanidine(in)</text>
        <dbReference type="Rhea" id="RHEA:73883"/>
        <dbReference type="ChEBI" id="CHEBI:30087"/>
    </reaction>
</comment>
<comment type="catalytic activity">
    <reaction evidence="1">
        <text>choline(out) = choline(in)</text>
        <dbReference type="Rhea" id="RHEA:32751"/>
        <dbReference type="ChEBI" id="CHEBI:15354"/>
    </reaction>
</comment>
<comment type="catalytic activity">
    <reaction evidence="1">
        <text>agmatine(out) = agmatine(in)</text>
        <dbReference type="Rhea" id="RHEA:72131"/>
        <dbReference type="ChEBI" id="CHEBI:58145"/>
    </reaction>
    <physiologicalReaction direction="left-to-right" evidence="1">
        <dbReference type="Rhea" id="RHEA:72132"/>
    </physiologicalReaction>
    <physiologicalReaction direction="right-to-left" evidence="1">
        <dbReference type="Rhea" id="RHEA:72133"/>
    </physiologicalReaction>
</comment>
<comment type="catalytic activity">
    <reaction evidence="1">
        <text>putrescine(out) = putrescine(in)</text>
        <dbReference type="Rhea" id="RHEA:72135"/>
        <dbReference type="ChEBI" id="CHEBI:326268"/>
    </reaction>
</comment>
<comment type="catalytic activity">
    <reaction evidence="11">
        <text>spermidine(in) = spermidine(out)</text>
        <dbReference type="Rhea" id="RHEA:35039"/>
        <dbReference type="ChEBI" id="CHEBI:57834"/>
    </reaction>
</comment>
<comment type="catalytic activity">
    <reaction evidence="1">
        <text>tyramine(in) = tyramine(out)</text>
        <dbReference type="Rhea" id="RHEA:74783"/>
        <dbReference type="ChEBI" id="CHEBI:327995"/>
    </reaction>
</comment>
<comment type="catalytic activity">
    <reaction evidence="1">
        <text>L-histidyl-L-proline diketopiperazine(in) = L-histidyl-L-proline diketopiperazine(out)</text>
        <dbReference type="Rhea" id="RHEA:74787"/>
        <dbReference type="ChEBI" id="CHEBI:90039"/>
    </reaction>
</comment>
<comment type="catalytic activity">
    <reaction evidence="1">
        <text>(R)-salsolinol(in) = (R)-salsolinol(out)</text>
        <dbReference type="Rhea" id="RHEA:74791"/>
        <dbReference type="ChEBI" id="CHEBI:194082"/>
    </reaction>
</comment>
<comment type="catalytic activity">
    <reaction evidence="1">
        <text>N-methyl-(R)-salsolinol(in) = N-methyl-(R)-salsolinol(out)</text>
        <dbReference type="Rhea" id="RHEA:74795"/>
        <dbReference type="ChEBI" id="CHEBI:194083"/>
    </reaction>
</comment>
<comment type="catalytic activity">
    <reaction evidence="1">
        <text>acetylcholine(in) = acetylcholine(out)</text>
        <dbReference type="Rhea" id="RHEA:74663"/>
        <dbReference type="ChEBI" id="CHEBI:15355"/>
    </reaction>
</comment>
<comment type="catalytic activity">
    <reaction evidence="1">
        <text>prostaglandin F2alpha(out) = prostaglandin F2alpha(in)</text>
        <dbReference type="Rhea" id="RHEA:50988"/>
        <dbReference type="ChEBI" id="CHEBI:57404"/>
    </reaction>
</comment>
<comment type="catalytic activity">
    <reaction evidence="1">
        <text>prostaglandin E2(out) = prostaglandin E2(in)</text>
        <dbReference type="Rhea" id="RHEA:50984"/>
        <dbReference type="ChEBI" id="CHEBI:606564"/>
    </reaction>
</comment>
<comment type="activity regulation">
    <text evidence="1 6">Tyrosine phosphorylation of the transporter leads to activation of the transport activity (PubMed:26979622). TEA uptake is activated by tyrosine phosphorylation (PubMed:26979622). Inhibited by cGMP, most likely through a cGMP-binding protein that interacts with OCT2 (By similarity).</text>
</comment>
<comment type="subcellular location">
    <subcellularLocation>
        <location evidence="2">Basolateral cell membrane</location>
        <topology evidence="10">Multi-pass membrane protein</topology>
    </subcellularLocation>
    <subcellularLocation>
        <location evidence="1">Basal cell membrane</location>
        <topology evidence="10">Multi-pass membrane protein</topology>
    </subcellularLocation>
    <subcellularLocation>
        <location evidence="1">Apical cell membrane</location>
        <topology evidence="10">Multi-pass membrane protein</topology>
    </subcellularLocation>
</comment>
<comment type="alternative products">
    <event type="alternative splicing"/>
    <isoform>
        <id>O70577-1</id>
        <name>1</name>
        <sequence type="displayed"/>
    </isoform>
    <isoform>
        <id>O70577-2</id>
        <name>2</name>
        <sequence type="described" ref="VSP_031775 VSP_031776"/>
    </isoform>
</comment>
<comment type="tissue specificity">
    <text evidence="4 6">Expressed in kidney and ureter (PubMed:10051314, PubMed:26979622). To a lower extent, also expressed in brain and embryo (PubMed:10051314).</text>
</comment>
<comment type="domain">
    <text evidence="6">Contains one proline-rich sequence (Pro-Glu-Ser-Pro-Arg) that may be involved in tyrosine-protein kinase YES1 binding and is required for the activation of substrate transport.</text>
</comment>
<comment type="PTM">
    <text evidence="6">Tyrosine phosphorylated by tyrosine-protein kinase YES1.</text>
</comment>
<comment type="miscellaneous">
    <text evidence="1 2 5">Mediates the renal secretion of many clinically used cationic drugs (By similarity) (PubMed:23458604). Transports drugs such as diabetes treatment medicine metformin and neurotoxins 1-methyl-4-phenylpyridinium (MPP(+)), famotidine, ranitidine, amantadine, acriflavine, amiloride, memantine, cimetidine, cisplatin, oxaliplatin, platinum-based drugs cisplatin and oxaliplatin, 3'-azido-3'-deoxythymidine (AZT) and tetraethylammonium (TEA) (PubMed:23458604). Mediates the bidirectional transport of MPP(+). Metformin competitively inhibits OCT1-mediated thiamine uptake, leading to a decrease in hepatic steatosis. Plays a predominant role in the anticancer activity of cisplatin and oxaliplatin and may contribute to antitumor specificity (By similarity). Involved in cisplatin-induced nephrotoxicity (By similarity).</text>
</comment>
<comment type="similarity">
    <text evidence="10">Belongs to the major facilitator (TC 2.A.1) superfamily. Organic cation transporter (TC 2.A.1.19) family.</text>
</comment>
<comment type="caution">
    <text evidence="1">While most authors have deduced a localization at the basolateral membrane of proximal tubules, other studies demonstrated a localization to the luminal membrane in the distal tubule.</text>
</comment>
<dbReference type="EMBL" id="AJ006036">
    <property type="protein sequence ID" value="CAA06827.1"/>
    <property type="molecule type" value="mRNA"/>
</dbReference>
<dbReference type="EMBL" id="AK052658">
    <property type="protein sequence ID" value="BAC35086.1"/>
    <property type="molecule type" value="mRNA"/>
</dbReference>
<dbReference type="EMBL" id="BC015250">
    <property type="protein sequence ID" value="AAH15250.1"/>
    <property type="molecule type" value="mRNA"/>
</dbReference>
<dbReference type="EMBL" id="BC069911">
    <property type="protein sequence ID" value="AAH69911.1"/>
    <property type="molecule type" value="mRNA"/>
</dbReference>
<dbReference type="EMBL" id="AF481054">
    <property type="protein sequence ID" value="AAM22158.1"/>
    <property type="molecule type" value="Genomic_DNA"/>
</dbReference>
<dbReference type="CCDS" id="CCDS28392.1">
    <molecule id="O70577-1"/>
</dbReference>
<dbReference type="CCDS" id="CCDS88992.1">
    <molecule id="O70577-2"/>
</dbReference>
<dbReference type="RefSeq" id="NP_001342696.1">
    <molecule id="O70577-2"/>
    <property type="nucleotide sequence ID" value="NM_001355767.1"/>
</dbReference>
<dbReference type="RefSeq" id="NP_038695.1">
    <molecule id="O70577-1"/>
    <property type="nucleotide sequence ID" value="NM_013667.3"/>
</dbReference>
<dbReference type="RefSeq" id="XP_011244498.1">
    <property type="nucleotide sequence ID" value="XM_011246196.1"/>
</dbReference>
<dbReference type="SMR" id="O70577"/>
<dbReference type="FunCoup" id="O70577">
    <property type="interactions" value="65"/>
</dbReference>
<dbReference type="STRING" id="10090.ENSMUSP00000041186"/>
<dbReference type="BindingDB" id="O70577"/>
<dbReference type="ChEMBL" id="CHEMBL2073662"/>
<dbReference type="GlyCosmos" id="O70577">
    <property type="glycosylation" value="1 site, No reported glycans"/>
</dbReference>
<dbReference type="GlyGen" id="O70577">
    <property type="glycosylation" value="1 site"/>
</dbReference>
<dbReference type="iPTMnet" id="O70577"/>
<dbReference type="PhosphoSitePlus" id="O70577"/>
<dbReference type="jPOST" id="O70577"/>
<dbReference type="PaxDb" id="10090-ENSMUSP00000041186"/>
<dbReference type="ProteomicsDB" id="260753">
    <molecule id="O70577-1"/>
</dbReference>
<dbReference type="ProteomicsDB" id="260754">
    <molecule id="O70577-2"/>
</dbReference>
<dbReference type="Antibodypedia" id="20032">
    <property type="antibodies" value="268 antibodies from 29 providers"/>
</dbReference>
<dbReference type="DNASU" id="20518"/>
<dbReference type="Ensembl" id="ENSMUST00000046959.9">
    <molecule id="O70577-1"/>
    <property type="protein sequence ID" value="ENSMUSP00000041186.8"/>
    <property type="gene ID" value="ENSMUSG00000040966.11"/>
</dbReference>
<dbReference type="Ensembl" id="ENSMUST00000233066.2">
    <molecule id="O70577-2"/>
    <property type="protein sequence ID" value="ENSMUSP00000156710.2"/>
    <property type="gene ID" value="ENSMUSG00000040966.11"/>
</dbReference>
<dbReference type="GeneID" id="20518"/>
<dbReference type="KEGG" id="mmu:20518"/>
<dbReference type="UCSC" id="uc008akw.1">
    <molecule id="O70577-1"/>
    <property type="organism name" value="mouse"/>
</dbReference>
<dbReference type="AGR" id="MGI:1335072"/>
<dbReference type="CTD" id="6582"/>
<dbReference type="MGI" id="MGI:1335072">
    <property type="gene designation" value="Slc22a2"/>
</dbReference>
<dbReference type="VEuPathDB" id="HostDB:ENSMUSG00000040966"/>
<dbReference type="eggNOG" id="KOG0255">
    <property type="taxonomic scope" value="Eukaryota"/>
</dbReference>
<dbReference type="GeneTree" id="ENSGT00940000155089"/>
<dbReference type="HOGENOM" id="CLU_001265_33_5_1"/>
<dbReference type="InParanoid" id="O70577"/>
<dbReference type="OMA" id="DLQWLKV"/>
<dbReference type="OrthoDB" id="5141738at2759"/>
<dbReference type="PhylomeDB" id="O70577"/>
<dbReference type="TreeFam" id="TF315847"/>
<dbReference type="Reactome" id="R-MMU-112311">
    <property type="pathway name" value="Neurotransmitter clearance"/>
</dbReference>
<dbReference type="Reactome" id="R-MMU-181430">
    <property type="pathway name" value="Norepinephrine Neurotransmitter Release Cycle"/>
</dbReference>
<dbReference type="Reactome" id="R-MMU-2161517">
    <property type="pathway name" value="Abacavir transmembrane transport"/>
</dbReference>
<dbReference type="Reactome" id="R-MMU-442660">
    <property type="pathway name" value="Na+/Cl- dependent neurotransmitter transporters"/>
</dbReference>
<dbReference type="Reactome" id="R-MMU-549127">
    <property type="pathway name" value="Organic cation transport"/>
</dbReference>
<dbReference type="BioGRID-ORCS" id="20518">
    <property type="hits" value="1 hit in 77 CRISPR screens"/>
</dbReference>
<dbReference type="ChiTaRS" id="Slc22a2">
    <property type="organism name" value="mouse"/>
</dbReference>
<dbReference type="PRO" id="PR:O70577"/>
<dbReference type="Proteomes" id="UP000000589">
    <property type="component" value="Chromosome 17"/>
</dbReference>
<dbReference type="RNAct" id="O70577">
    <property type="molecule type" value="protein"/>
</dbReference>
<dbReference type="Bgee" id="ENSMUSG00000040966">
    <property type="expression patterns" value="Expressed in right kidney and 41 other cell types or tissues"/>
</dbReference>
<dbReference type="GO" id="GO:0016324">
    <property type="term" value="C:apical plasma membrane"/>
    <property type="evidence" value="ECO:0000314"/>
    <property type="project" value="ARUK-UCL"/>
</dbReference>
<dbReference type="GO" id="GO:0009925">
    <property type="term" value="C:basal plasma membrane"/>
    <property type="evidence" value="ECO:0000250"/>
    <property type="project" value="UniProtKB"/>
</dbReference>
<dbReference type="GO" id="GO:0016323">
    <property type="term" value="C:basolateral plasma membrane"/>
    <property type="evidence" value="ECO:0000250"/>
    <property type="project" value="UniProtKB"/>
</dbReference>
<dbReference type="GO" id="GO:0005886">
    <property type="term" value="C:plasma membrane"/>
    <property type="evidence" value="ECO:0000266"/>
    <property type="project" value="MGI"/>
</dbReference>
<dbReference type="GO" id="GO:0098793">
    <property type="term" value="C:presynapse"/>
    <property type="evidence" value="ECO:0007669"/>
    <property type="project" value="GOC"/>
</dbReference>
<dbReference type="GO" id="GO:0005277">
    <property type="term" value="F:acetylcholine transmembrane transporter activity"/>
    <property type="evidence" value="ECO:0000250"/>
    <property type="project" value="UniProtKB"/>
</dbReference>
<dbReference type="GO" id="GO:0005275">
    <property type="term" value="F:amine transmembrane transporter activity"/>
    <property type="evidence" value="ECO:0007669"/>
    <property type="project" value="Ensembl"/>
</dbReference>
<dbReference type="GO" id="GO:0015220">
    <property type="term" value="F:choline transmembrane transporter activity"/>
    <property type="evidence" value="ECO:0007669"/>
    <property type="project" value="Ensembl"/>
</dbReference>
<dbReference type="GO" id="GO:0015562">
    <property type="term" value="F:efflux transmembrane transporter activity"/>
    <property type="evidence" value="ECO:0007669"/>
    <property type="project" value="Ensembl"/>
</dbReference>
<dbReference type="GO" id="GO:0061459">
    <property type="term" value="F:L-arginine transmembrane transporter activity"/>
    <property type="evidence" value="ECO:0007669"/>
    <property type="project" value="Ensembl"/>
</dbReference>
<dbReference type="GO" id="GO:0008504">
    <property type="term" value="F:monoamine transmembrane transporter activity"/>
    <property type="evidence" value="ECO:0000250"/>
    <property type="project" value="UniProtKB"/>
</dbReference>
<dbReference type="GO" id="GO:0005326">
    <property type="term" value="F:neurotransmitter transmembrane transporter activity"/>
    <property type="evidence" value="ECO:0000250"/>
    <property type="project" value="UniProtKB"/>
</dbReference>
<dbReference type="GO" id="GO:0008514">
    <property type="term" value="F:organic anion transmembrane transporter activity"/>
    <property type="evidence" value="ECO:0000250"/>
    <property type="project" value="UniProtKB"/>
</dbReference>
<dbReference type="GO" id="GO:0015101">
    <property type="term" value="F:organic cation transmembrane transporter activity"/>
    <property type="evidence" value="ECO:0000314"/>
    <property type="project" value="MGI"/>
</dbReference>
<dbReference type="GO" id="GO:0015132">
    <property type="term" value="F:prostaglandin transmembrane transporter activity"/>
    <property type="evidence" value="ECO:0000250"/>
    <property type="project" value="UniProtKB"/>
</dbReference>
<dbReference type="GO" id="GO:0015489">
    <property type="term" value="F:putrescine transmembrane transporter activity"/>
    <property type="evidence" value="ECO:0000250"/>
    <property type="project" value="UniProtKB"/>
</dbReference>
<dbReference type="GO" id="GO:0015214">
    <property type="term" value="F:pyrimidine nucleoside transmembrane transporter activity"/>
    <property type="evidence" value="ECO:0000315"/>
    <property type="project" value="ARUK-UCL"/>
</dbReference>
<dbReference type="GO" id="GO:0015651">
    <property type="term" value="F:quaternary ammonium group transmembrane transporter activity"/>
    <property type="evidence" value="ECO:0000250"/>
    <property type="project" value="UniProtKB"/>
</dbReference>
<dbReference type="GO" id="GO:0015234">
    <property type="term" value="F:thiamine transmembrane transporter activity"/>
    <property type="evidence" value="ECO:0000250"/>
    <property type="project" value="UniProtKB"/>
</dbReference>
<dbReference type="GO" id="GO:0019534">
    <property type="term" value="F:toxin transmembrane transporter activity"/>
    <property type="evidence" value="ECO:0000315"/>
    <property type="project" value="ARUK-UCL"/>
</dbReference>
<dbReference type="GO" id="GO:0042910">
    <property type="term" value="F:xenobiotic transmembrane transporter activity"/>
    <property type="evidence" value="ECO:0000315"/>
    <property type="project" value="ARUK-UCL"/>
</dbReference>
<dbReference type="GO" id="GO:0015870">
    <property type="term" value="P:acetylcholine transport"/>
    <property type="evidence" value="ECO:0000250"/>
    <property type="project" value="UniProtKB"/>
</dbReference>
<dbReference type="GO" id="GO:1990748">
    <property type="term" value="P:cellular detoxification"/>
    <property type="evidence" value="ECO:0000315"/>
    <property type="project" value="ARUK-UCL"/>
</dbReference>
<dbReference type="GO" id="GO:0015872">
    <property type="term" value="P:dopamine transport"/>
    <property type="evidence" value="ECO:0000250"/>
    <property type="project" value="UniProtKB"/>
</dbReference>
<dbReference type="GO" id="GO:0090494">
    <property type="term" value="P:dopamine uptake"/>
    <property type="evidence" value="ECO:0007669"/>
    <property type="project" value="Ensembl"/>
</dbReference>
<dbReference type="GO" id="GO:0048241">
    <property type="term" value="P:epinephrine transport"/>
    <property type="evidence" value="ECO:0000250"/>
    <property type="project" value="UniProtKB"/>
</dbReference>
<dbReference type="GO" id="GO:0140115">
    <property type="term" value="P:export across plasma membrane"/>
    <property type="evidence" value="ECO:0007669"/>
    <property type="project" value="Ensembl"/>
</dbReference>
<dbReference type="GO" id="GO:0051608">
    <property type="term" value="P:histamine transport"/>
    <property type="evidence" value="ECO:0000250"/>
    <property type="project" value="UniProtKB"/>
</dbReference>
<dbReference type="GO" id="GO:0051615">
    <property type="term" value="P:histamine uptake"/>
    <property type="evidence" value="ECO:0007669"/>
    <property type="project" value="Ensembl"/>
</dbReference>
<dbReference type="GO" id="GO:0097638">
    <property type="term" value="P:L-arginine import across plasma membrane"/>
    <property type="evidence" value="ECO:0007669"/>
    <property type="project" value="Ensembl"/>
</dbReference>
<dbReference type="GO" id="GO:0006812">
    <property type="term" value="P:monoatomic cation transport"/>
    <property type="evidence" value="ECO:0000314"/>
    <property type="project" value="MGI"/>
</dbReference>
<dbReference type="GO" id="GO:0015874">
    <property type="term" value="P:norepinephrine transport"/>
    <property type="evidence" value="ECO:0000250"/>
    <property type="project" value="UniProtKB"/>
</dbReference>
<dbReference type="GO" id="GO:0051620">
    <property type="term" value="P:norepinephrine uptake"/>
    <property type="evidence" value="ECO:0007669"/>
    <property type="project" value="Ensembl"/>
</dbReference>
<dbReference type="GO" id="GO:0015695">
    <property type="term" value="P:organic cation transport"/>
    <property type="evidence" value="ECO:0000266"/>
    <property type="project" value="MGI"/>
</dbReference>
<dbReference type="GO" id="GO:0015732">
    <property type="term" value="P:prostaglandin transport"/>
    <property type="evidence" value="ECO:0000250"/>
    <property type="project" value="UniProtKB"/>
</dbReference>
<dbReference type="GO" id="GO:0015847">
    <property type="term" value="P:putrescine transport"/>
    <property type="evidence" value="ECO:0000250"/>
    <property type="project" value="UniProtKB"/>
</dbReference>
<dbReference type="GO" id="GO:0006837">
    <property type="term" value="P:serotonin transport"/>
    <property type="evidence" value="ECO:0000250"/>
    <property type="project" value="UniProtKB"/>
</dbReference>
<dbReference type="GO" id="GO:0051610">
    <property type="term" value="P:serotonin uptake"/>
    <property type="evidence" value="ECO:0007669"/>
    <property type="project" value="Ensembl"/>
</dbReference>
<dbReference type="GO" id="GO:0071934">
    <property type="term" value="P:thiamine transmembrane transport"/>
    <property type="evidence" value="ECO:0000250"/>
    <property type="project" value="UniProtKB"/>
</dbReference>
<dbReference type="GO" id="GO:0042908">
    <property type="term" value="P:xenobiotic transport"/>
    <property type="evidence" value="ECO:0000315"/>
    <property type="project" value="ARUK-UCL"/>
</dbReference>
<dbReference type="GO" id="GO:1990962">
    <property type="term" value="P:xenobiotic transport across blood-brain barrier"/>
    <property type="evidence" value="ECO:0000303"/>
    <property type="project" value="ARUK-UCL"/>
</dbReference>
<dbReference type="CDD" id="cd17379">
    <property type="entry name" value="MFS_SLC22A1_2_3"/>
    <property type="match status" value="1"/>
</dbReference>
<dbReference type="FunFam" id="1.20.1250.20:FF:000148">
    <property type="entry name" value="Solute carrier family 22 member 2"/>
    <property type="match status" value="1"/>
</dbReference>
<dbReference type="Gene3D" id="1.20.1250.20">
    <property type="entry name" value="MFS general substrate transporter like domains"/>
    <property type="match status" value="1"/>
</dbReference>
<dbReference type="InterPro" id="IPR020846">
    <property type="entry name" value="MFS_dom"/>
</dbReference>
<dbReference type="InterPro" id="IPR005828">
    <property type="entry name" value="MFS_sugar_transport-like"/>
</dbReference>
<dbReference type="InterPro" id="IPR036259">
    <property type="entry name" value="MFS_trans_sf"/>
</dbReference>
<dbReference type="InterPro" id="IPR004749">
    <property type="entry name" value="Orgcat_transp/SVOP"/>
</dbReference>
<dbReference type="InterPro" id="IPR005829">
    <property type="entry name" value="Sugar_transporter_CS"/>
</dbReference>
<dbReference type="NCBIfam" id="TIGR00898">
    <property type="entry name" value="2A0119"/>
    <property type="match status" value="1"/>
</dbReference>
<dbReference type="PANTHER" id="PTHR24064">
    <property type="entry name" value="SOLUTE CARRIER FAMILY 22 MEMBER"/>
    <property type="match status" value="1"/>
</dbReference>
<dbReference type="Pfam" id="PF00083">
    <property type="entry name" value="Sugar_tr"/>
    <property type="match status" value="1"/>
</dbReference>
<dbReference type="SUPFAM" id="SSF103473">
    <property type="entry name" value="MFS general substrate transporter"/>
    <property type="match status" value="1"/>
</dbReference>
<dbReference type="PROSITE" id="PS50850">
    <property type="entry name" value="MFS"/>
    <property type="match status" value="1"/>
</dbReference>
<dbReference type="PROSITE" id="PS00216">
    <property type="entry name" value="SUGAR_TRANSPORT_1"/>
    <property type="match status" value="2"/>
</dbReference>
<keyword id="KW-0025">Alternative splicing</keyword>
<keyword id="KW-1003">Cell membrane</keyword>
<keyword id="KW-0325">Glycoprotein</keyword>
<keyword id="KW-0406">Ion transport</keyword>
<keyword id="KW-0472">Membrane</keyword>
<keyword id="KW-0597">Phosphoprotein</keyword>
<keyword id="KW-1185">Reference proteome</keyword>
<keyword id="KW-0812">Transmembrane</keyword>
<keyword id="KW-1133">Transmembrane helix</keyword>
<keyword id="KW-0813">Transport</keyword>